<organism>
    <name type="scientific">Oryza sativa subsp. japonica</name>
    <name type="common">Rice</name>
    <dbReference type="NCBI Taxonomy" id="39947"/>
    <lineage>
        <taxon>Eukaryota</taxon>
        <taxon>Viridiplantae</taxon>
        <taxon>Streptophyta</taxon>
        <taxon>Embryophyta</taxon>
        <taxon>Tracheophyta</taxon>
        <taxon>Spermatophyta</taxon>
        <taxon>Magnoliopsida</taxon>
        <taxon>Liliopsida</taxon>
        <taxon>Poales</taxon>
        <taxon>Poaceae</taxon>
        <taxon>BOP clade</taxon>
        <taxon>Oryzoideae</taxon>
        <taxon>Oryzeae</taxon>
        <taxon>Oryzinae</taxon>
        <taxon>Oryza</taxon>
        <taxon>Oryza sativa</taxon>
    </lineage>
</organism>
<proteinExistence type="evidence at transcript level"/>
<accession>Q69NY7</accession>
<accession>Q0D8J9</accession>
<reference key="1">
    <citation type="journal article" date="2005" name="Nature">
        <title>The map-based sequence of the rice genome.</title>
        <authorList>
            <consortium name="International rice genome sequencing project (IRGSP)"/>
        </authorList>
    </citation>
    <scope>NUCLEOTIDE SEQUENCE [LARGE SCALE GENOMIC DNA]</scope>
    <source>
        <strain>cv. Nipponbare</strain>
    </source>
</reference>
<reference key="2">
    <citation type="journal article" date="2008" name="Nucleic Acids Res.">
        <title>The rice annotation project database (RAP-DB): 2008 update.</title>
        <authorList>
            <consortium name="The rice annotation project (RAP)"/>
        </authorList>
    </citation>
    <scope>GENOME REANNOTATION</scope>
    <source>
        <strain>cv. Nipponbare</strain>
    </source>
</reference>
<reference key="3">
    <citation type="journal article" date="2013" name="Rice">
        <title>Improvement of the Oryza sativa Nipponbare reference genome using next generation sequence and optical map data.</title>
        <authorList>
            <person name="Kawahara Y."/>
            <person name="de la Bastide M."/>
            <person name="Hamilton J.P."/>
            <person name="Kanamori H."/>
            <person name="McCombie W.R."/>
            <person name="Ouyang S."/>
            <person name="Schwartz D.C."/>
            <person name="Tanaka T."/>
            <person name="Wu J."/>
            <person name="Zhou S."/>
            <person name="Childs K.L."/>
            <person name="Davidson R.M."/>
            <person name="Lin H."/>
            <person name="Quesada-Ocampo L."/>
            <person name="Vaillancourt B."/>
            <person name="Sakai H."/>
            <person name="Lee S.S."/>
            <person name="Kim J."/>
            <person name="Numa H."/>
            <person name="Itoh T."/>
            <person name="Buell C.R."/>
            <person name="Matsumoto T."/>
        </authorList>
    </citation>
    <scope>GENOME REANNOTATION</scope>
    <source>
        <strain>cv. Nipponbare</strain>
    </source>
</reference>
<reference key="4">
    <citation type="journal article" date="2009" name="Plant Mol. Biol.">
        <title>Identification and expression profiling analysis of TIFY family genes involved in stress and phytohormone responses in rice.</title>
        <authorList>
            <person name="Ye H."/>
            <person name="Du H."/>
            <person name="Tang N."/>
            <person name="Li X."/>
            <person name="Xiong L."/>
        </authorList>
    </citation>
    <scope>GENE FAMILY</scope>
    <scope>NOMENCLATURE</scope>
    <scope>INDUCTION</scope>
</reference>
<keyword id="KW-1184">Jasmonic acid signaling pathway</keyword>
<keyword id="KW-0539">Nucleus</keyword>
<keyword id="KW-1185">Reference proteome</keyword>
<keyword id="KW-0804">Transcription</keyword>
<keyword id="KW-0805">Transcription regulation</keyword>
<keyword id="KW-0832">Ubl conjugation</keyword>
<name>TIF5_ORYSJ</name>
<evidence type="ECO:0000250" key="1">
    <source>
        <dbReference type="UniProtKB" id="Q7XPM8"/>
    </source>
</evidence>
<evidence type="ECO:0000255" key="2"/>
<evidence type="ECO:0000255" key="3">
    <source>
        <dbReference type="PROSITE-ProRule" id="PRU00650"/>
    </source>
</evidence>
<evidence type="ECO:0000255" key="4">
    <source>
        <dbReference type="PROSITE-ProRule" id="PRU00768"/>
    </source>
</evidence>
<evidence type="ECO:0000256" key="5">
    <source>
        <dbReference type="SAM" id="MobiDB-lite"/>
    </source>
</evidence>
<evidence type="ECO:0000269" key="6">
    <source>
    </source>
</evidence>
<evidence type="ECO:0000303" key="7">
    <source>
    </source>
</evidence>
<evidence type="ECO:0000305" key="8"/>
<evidence type="ECO:0000312" key="9">
    <source>
        <dbReference type="EMBL" id="BAD31580.1"/>
    </source>
</evidence>
<evidence type="ECO:0000312" key="10">
    <source>
        <dbReference type="EMBL" id="BAF20824.2"/>
    </source>
</evidence>
<sequence>MAEERRRDDGGDVEVELSLRLRTGDDSTSADPAPATVAAEARRNLTIFYNGRMCAVNVTELQARTIISMASQGNFGKQQQQQIQGRDDHHYHQGESSSGGGVSTAAARHCDVAGSSSSHSGSGSGSATPPRPALVSPRAGLQAAAAAAPTMNQPPAASGLSMKRSLQRFLEKRKTRAAAPLYARR</sequence>
<dbReference type="EMBL" id="AP005632">
    <property type="protein sequence ID" value="BAD31580.1"/>
    <property type="molecule type" value="Genomic_DNA"/>
</dbReference>
<dbReference type="EMBL" id="AP008213">
    <property type="protein sequence ID" value="BAF20824.2"/>
    <property type="molecule type" value="Genomic_DNA"/>
</dbReference>
<dbReference type="EMBL" id="AP014963">
    <property type="status" value="NOT_ANNOTATED_CDS"/>
    <property type="molecule type" value="Genomic_DNA"/>
</dbReference>
<dbReference type="RefSeq" id="XP_015646242.1">
    <property type="nucleotide sequence ID" value="XM_015790756.1"/>
</dbReference>
<dbReference type="FunCoup" id="Q69NY7">
    <property type="interactions" value="9"/>
</dbReference>
<dbReference type="STRING" id="39947.Q69NY7"/>
<dbReference type="PaxDb" id="39947-Q69NY7"/>
<dbReference type="EnsemblPlants" id="Os07t0153000-01">
    <property type="protein sequence ID" value="Os07t0153000-01"/>
    <property type="gene ID" value="Os07g0153000"/>
</dbReference>
<dbReference type="Gramene" id="Os07t0153000-01">
    <property type="protein sequence ID" value="Os07t0153000-01"/>
    <property type="gene ID" value="Os07g0153000"/>
</dbReference>
<dbReference type="KEGG" id="dosa:Os07g0153000"/>
<dbReference type="InParanoid" id="Q69NY7"/>
<dbReference type="OrthoDB" id="782771at2759"/>
<dbReference type="PlantReactome" id="R-OSA-6787011">
    <property type="pathway name" value="Jasmonic acid signaling"/>
</dbReference>
<dbReference type="Proteomes" id="UP000000763">
    <property type="component" value="Chromosome 7"/>
</dbReference>
<dbReference type="Proteomes" id="UP000059680">
    <property type="component" value="Chromosome 7"/>
</dbReference>
<dbReference type="GO" id="GO:0005634">
    <property type="term" value="C:nucleus"/>
    <property type="evidence" value="ECO:0000318"/>
    <property type="project" value="GO_Central"/>
</dbReference>
<dbReference type="GO" id="GO:0031347">
    <property type="term" value="P:regulation of defense response"/>
    <property type="evidence" value="ECO:0000318"/>
    <property type="project" value="GO_Central"/>
</dbReference>
<dbReference type="GO" id="GO:2000022">
    <property type="term" value="P:regulation of jasmonic acid mediated signaling pathway"/>
    <property type="evidence" value="ECO:0000318"/>
    <property type="project" value="GO_Central"/>
</dbReference>
<dbReference type="GO" id="GO:0009611">
    <property type="term" value="P:response to wounding"/>
    <property type="evidence" value="ECO:0000318"/>
    <property type="project" value="GO_Central"/>
</dbReference>
<dbReference type="InterPro" id="IPR018467">
    <property type="entry name" value="CCT_CS"/>
</dbReference>
<dbReference type="InterPro" id="IPR040390">
    <property type="entry name" value="TIFY/JAZ"/>
</dbReference>
<dbReference type="InterPro" id="IPR010399">
    <property type="entry name" value="Tify_dom"/>
</dbReference>
<dbReference type="PANTHER" id="PTHR33077">
    <property type="entry name" value="PROTEIN TIFY 4A-RELATED-RELATED"/>
    <property type="match status" value="1"/>
</dbReference>
<dbReference type="PANTHER" id="PTHR33077:SF17">
    <property type="entry name" value="PROTEIN TIFY 5B"/>
    <property type="match status" value="1"/>
</dbReference>
<dbReference type="Pfam" id="PF09425">
    <property type="entry name" value="Jas_motif"/>
    <property type="match status" value="1"/>
</dbReference>
<dbReference type="Pfam" id="PF06200">
    <property type="entry name" value="tify"/>
    <property type="match status" value="1"/>
</dbReference>
<dbReference type="PROSITE" id="PS51320">
    <property type="entry name" value="TIFY"/>
    <property type="match status" value="1"/>
</dbReference>
<protein>
    <recommendedName>
        <fullName evidence="8">Protein TIFY 5</fullName>
        <shortName evidence="7">OsTIFY5</shortName>
    </recommendedName>
    <alternativeName>
        <fullName evidence="8">Jasmonate ZIM domain-containing protein 2</fullName>
        <shortName evidence="7">OsJAZ2</shortName>
    </alternativeName>
</protein>
<gene>
    <name evidence="7" type="primary">TIFY5</name>
    <name evidence="7" type="synonym">JAZ2</name>
    <name evidence="10" type="ordered locus">Os07g0153000</name>
    <name evidence="8" type="ordered locus">LOC_Os07g05830</name>
    <name evidence="9" type="ORF">OSJNBb0050B07.2</name>
</gene>
<comment type="function">
    <text evidence="1">Repressor of jasmonate responses.</text>
</comment>
<comment type="subcellular location">
    <subcellularLocation>
        <location evidence="4">Nucleus</location>
    </subcellularLocation>
</comment>
<comment type="induction">
    <text evidence="6">By abscisic acid (ABA), and drought and salt stresses. Down-regulated by jasmonate and wounding.</text>
</comment>
<comment type="domain">
    <text evidence="1">The jas domain (155-182) is required for interaction with COI1.</text>
</comment>
<comment type="PTM">
    <text evidence="1">Ubiquitinated. Targeted for degradation by the SCF(COI1) E3 ubiquitin ligase-proteasome pathway during jasmonate signaling.</text>
</comment>
<comment type="similarity">
    <text evidence="8">Belongs to the TIFY/JAZ family.</text>
</comment>
<feature type="chain" id="PRO_0000434840" description="Protein TIFY 5">
    <location>
        <begin position="1"/>
        <end position="185"/>
    </location>
</feature>
<feature type="domain" description="Tify" evidence="3">
    <location>
        <begin position="38"/>
        <end position="72"/>
    </location>
</feature>
<feature type="region of interest" description="Disordered" evidence="5">
    <location>
        <begin position="77"/>
        <end position="185"/>
    </location>
</feature>
<feature type="short sequence motif" description="Jas" evidence="2">
    <location>
        <begin position="155"/>
        <end position="182"/>
    </location>
</feature>
<feature type="short sequence motif" description="Nuclear localization signal" evidence="4">
    <location>
        <begin position="162"/>
        <end position="169"/>
    </location>
</feature>
<feature type="compositionally biased region" description="Low complexity" evidence="5">
    <location>
        <begin position="137"/>
        <end position="157"/>
    </location>
</feature>